<gene>
    <name type="primary">Siae</name>
    <name type="synonym">Ysg2</name>
</gene>
<accession>P70665</accession>
<accession>Q3TNZ5</accession>
<accession>Q544V7</accession>
<accession>Q61044</accession>
<accession>Q8C902</accession>
<accession>Q8CBM6</accession>
<accession>Q8CC41</accession>
<accession>Q8CEB7</accession>
<accession>Q922L0</accession>
<dbReference type="EC" id="3.1.1.53" evidence="3 4 11"/>
<dbReference type="EMBL" id="U61183">
    <property type="protein sequence ID" value="AAC52880.1"/>
    <property type="molecule type" value="mRNA"/>
</dbReference>
<dbReference type="EMBL" id="X98625">
    <property type="protein sequence ID" value="CAA67214.1"/>
    <property type="molecule type" value="mRNA"/>
</dbReference>
<dbReference type="EMBL" id="U40408">
    <property type="protein sequence ID" value="AAB07813.1"/>
    <property type="molecule type" value="mRNA"/>
</dbReference>
<dbReference type="EMBL" id="AF156856">
    <property type="protein sequence ID" value="AAD55976.1"/>
    <property type="molecule type" value="mRNA"/>
</dbReference>
<dbReference type="EMBL" id="AK028598">
    <property type="protein sequence ID" value="BAC26026.1"/>
    <property type="molecule type" value="mRNA"/>
</dbReference>
<dbReference type="EMBL" id="AK028656">
    <property type="protein sequence ID" value="BAC26049.1"/>
    <property type="molecule type" value="mRNA"/>
</dbReference>
<dbReference type="EMBL" id="AK033980">
    <property type="protein sequence ID" value="BAC28536.1"/>
    <property type="molecule type" value="mRNA"/>
</dbReference>
<dbReference type="EMBL" id="AK035715">
    <property type="protein sequence ID" value="BAC29164.1"/>
    <property type="status" value="ALT_INIT"/>
    <property type="molecule type" value="mRNA"/>
</dbReference>
<dbReference type="EMBL" id="AK043392">
    <property type="protein sequence ID" value="BAC31534.1"/>
    <property type="molecule type" value="mRNA"/>
</dbReference>
<dbReference type="EMBL" id="AK164852">
    <property type="protein sequence ID" value="BAE37942.1"/>
    <property type="molecule type" value="mRNA"/>
</dbReference>
<dbReference type="EMBL" id="AK167103">
    <property type="protein sequence ID" value="BAE39252.1"/>
    <property type="molecule type" value="mRNA"/>
</dbReference>
<dbReference type="EMBL" id="BC007136">
    <property type="protein sequence ID" value="AAH07136.1"/>
    <property type="molecule type" value="mRNA"/>
</dbReference>
<dbReference type="CCDS" id="CCDS22983.1">
    <molecule id="P70665-1"/>
</dbReference>
<dbReference type="RefSeq" id="NP_035864.2">
    <molecule id="P70665-1"/>
    <property type="nucleotide sequence ID" value="NM_011734.3"/>
</dbReference>
<dbReference type="SMR" id="P70665"/>
<dbReference type="BioGRID" id="204616">
    <property type="interactions" value="17"/>
</dbReference>
<dbReference type="FunCoup" id="P70665">
    <property type="interactions" value="249"/>
</dbReference>
<dbReference type="STRING" id="10090.ENSMUSP00000149505"/>
<dbReference type="GlyConnect" id="2708">
    <property type="glycosylation" value="3 N-Linked glycans (2 sites)"/>
</dbReference>
<dbReference type="GlyCosmos" id="P70665">
    <property type="glycosylation" value="8 sites, 3 glycans"/>
</dbReference>
<dbReference type="GlyGen" id="P70665">
    <property type="glycosylation" value="10 sites, 7 N-linked glycans (4 sites), 1 O-linked glycan (2 sites)"/>
</dbReference>
<dbReference type="iPTMnet" id="P70665"/>
<dbReference type="PhosphoSitePlus" id="P70665"/>
<dbReference type="jPOST" id="P70665"/>
<dbReference type="PaxDb" id="10090-ENSMUSP00000002007"/>
<dbReference type="PeptideAtlas" id="P70665"/>
<dbReference type="ProteomicsDB" id="257240">
    <molecule id="P70665-1"/>
</dbReference>
<dbReference type="ProteomicsDB" id="257241">
    <molecule id="P70665-2"/>
</dbReference>
<dbReference type="ProteomicsDB" id="257242">
    <molecule id="P70665-3"/>
</dbReference>
<dbReference type="Pumba" id="P70665"/>
<dbReference type="Antibodypedia" id="32895">
    <property type="antibodies" value="63 antibodies from 17 providers"/>
</dbReference>
<dbReference type="Ensembl" id="ENSMUST00000215474.2">
    <molecule id="P70665-1"/>
    <property type="protein sequence ID" value="ENSMUSP00000149505.2"/>
    <property type="gene ID" value="ENSMUSG00000001942.9"/>
</dbReference>
<dbReference type="GeneID" id="22619"/>
<dbReference type="KEGG" id="mmu:22619"/>
<dbReference type="UCSC" id="uc009ove.1">
    <molecule id="P70665-3"/>
    <property type="organism name" value="mouse"/>
</dbReference>
<dbReference type="UCSC" id="uc009ovf.1">
    <molecule id="P70665-1"/>
    <property type="organism name" value="mouse"/>
</dbReference>
<dbReference type="AGR" id="MGI:104803"/>
<dbReference type="CTD" id="54414"/>
<dbReference type="MGI" id="MGI:104803">
    <property type="gene designation" value="Siae"/>
</dbReference>
<dbReference type="VEuPathDB" id="HostDB:ENSMUSG00000001942"/>
<dbReference type="eggNOG" id="ENOG502QUKD">
    <property type="taxonomic scope" value="Eukaryota"/>
</dbReference>
<dbReference type="GeneTree" id="ENSGT00390000010608"/>
<dbReference type="HOGENOM" id="CLU_015150_1_0_1"/>
<dbReference type="InParanoid" id="P70665"/>
<dbReference type="OMA" id="PCEFKAC"/>
<dbReference type="OrthoDB" id="42638at2759"/>
<dbReference type="PhylomeDB" id="P70665"/>
<dbReference type="TreeFam" id="TF328611"/>
<dbReference type="BRENDA" id="3.1.1.53">
    <property type="organism ID" value="3474"/>
</dbReference>
<dbReference type="BioGRID-ORCS" id="22619">
    <property type="hits" value="3 hits in 79 CRISPR screens"/>
</dbReference>
<dbReference type="ChiTaRS" id="Siae">
    <property type="organism name" value="mouse"/>
</dbReference>
<dbReference type="PRO" id="PR:P70665"/>
<dbReference type="Proteomes" id="UP000000589">
    <property type="component" value="Chromosome 9"/>
</dbReference>
<dbReference type="RNAct" id="P70665">
    <property type="molecule type" value="Protein"/>
</dbReference>
<dbReference type="Bgee" id="ENSMUSG00000001942">
    <property type="expression patterns" value="Expressed in small intestine Peyer's patch and 233 other cell types or tissues"/>
</dbReference>
<dbReference type="ExpressionAtlas" id="P70665">
    <property type="expression patterns" value="baseline and differential"/>
</dbReference>
<dbReference type="GO" id="GO:0005764">
    <property type="term" value="C:lysosome"/>
    <property type="evidence" value="ECO:0000314"/>
    <property type="project" value="MGI"/>
</dbReference>
<dbReference type="GO" id="GO:0106330">
    <property type="term" value="F:sialate 9-O-acetylesterase activity"/>
    <property type="evidence" value="ECO:0007669"/>
    <property type="project" value="RHEA"/>
</dbReference>
<dbReference type="GO" id="GO:0005975">
    <property type="term" value="P:carbohydrate metabolic process"/>
    <property type="evidence" value="ECO:0007669"/>
    <property type="project" value="Ensembl"/>
</dbReference>
<dbReference type="GO" id="GO:0002682">
    <property type="term" value="P:regulation of immune system process"/>
    <property type="evidence" value="ECO:0007669"/>
    <property type="project" value="Ensembl"/>
</dbReference>
<dbReference type="FunFam" id="3.40.50.1110:FF:000008">
    <property type="entry name" value="Sialate O-acetylesterase"/>
    <property type="match status" value="1"/>
</dbReference>
<dbReference type="Gene3D" id="3.40.50.1110">
    <property type="entry name" value="SGNH hydrolase"/>
    <property type="match status" value="1"/>
</dbReference>
<dbReference type="InterPro" id="IPR036514">
    <property type="entry name" value="SGNH_hydro_sf"/>
</dbReference>
<dbReference type="InterPro" id="IPR039329">
    <property type="entry name" value="SIAE"/>
</dbReference>
<dbReference type="PANTHER" id="PTHR22901">
    <property type="entry name" value="SIALATE O-ACETYLESTERASE"/>
    <property type="match status" value="1"/>
</dbReference>
<dbReference type="PANTHER" id="PTHR22901:SF0">
    <property type="entry name" value="SIALATE O-ACETYLESTERASE"/>
    <property type="match status" value="1"/>
</dbReference>
<dbReference type="SUPFAM" id="SSF52266">
    <property type="entry name" value="SGNH hydrolase"/>
    <property type="match status" value="1"/>
</dbReference>
<reference key="1">
    <citation type="journal article" date="1996" name="Nucleic Acids Res.">
        <title>Molecular cloning of the cDNA encoding a murine sialic acid-specific 9-O-acetylesterase and RNA expression in cells of hematopoietic and non-hematopoietic origin.</title>
        <authorList>
            <person name="Stoddart A."/>
            <person name="Zhang Y."/>
            <person name="Paige C.J."/>
        </authorList>
    </citation>
    <scope>NUCLEOTIDE SEQUENCE [MRNA] (ISOFORM 1)</scope>
    <scope>TISSUE SPECIFICITY</scope>
    <source>
        <strain>C57BL/6 X DBA/2</strain>
    </source>
</reference>
<reference key="2">
    <citation type="journal article" date="1996" name="J. Biol. Chem.">
        <title>Molecular cloning and characterization of lysosomal sialic acid O-acetylesterase.</title>
        <authorList>
            <person name="Guimaraes M.J."/>
            <person name="Bazan J.F."/>
            <person name="Castagnola J."/>
            <person name="Diaz S."/>
            <person name="Copeland N.G."/>
            <person name="Gilbert D.J."/>
            <person name="Jenkins N.A."/>
            <person name="Varki A."/>
            <person name="Zlotnik A."/>
        </authorList>
    </citation>
    <scope>NUCLEOTIDE SEQUENCE [MRNA] (ISOFORM 1)</scope>
    <scope>FUNCTION</scope>
    <scope>CATALYTIC ACTIVITY</scope>
    <scope>TISSUE SPECIFICITY</scope>
</reference>
<reference key="3">
    <citation type="journal article" date="1999" name="J. Biol. Chem.">
        <title>Lysosomal and cytosolic sialic acid 9-O-acetylesterase activities can be encoded by one gene via differential usage of a signal peptide-encoding exon at the N-terminus.</title>
        <authorList>
            <person name="Takematsu H."/>
            <person name="Diaz S."/>
            <person name="Stoddart A."/>
            <person name="Zhang Y."/>
            <person name="Varki A."/>
        </authorList>
    </citation>
    <scope>NUCLEOTIDE SEQUENCE [MRNA] (ISOFORM 2)</scope>
    <scope>SUBCELLULAR LOCATION (ISOFORMS 1 AND 2)</scope>
    <scope>CATALYTIC ACTIVITY</scope>
    <scope>FUNCTION</scope>
    <scope>TISSUE SPECIFICITY (ISOFORMS 1 AND 2)</scope>
    <source>
        <tissue>B-cell</tissue>
    </source>
</reference>
<reference key="4">
    <citation type="journal article" date="2005" name="Science">
        <title>The transcriptional landscape of the mammalian genome.</title>
        <authorList>
            <person name="Carninci P."/>
            <person name="Kasukawa T."/>
            <person name="Katayama S."/>
            <person name="Gough J."/>
            <person name="Frith M.C."/>
            <person name="Maeda N."/>
            <person name="Oyama R."/>
            <person name="Ravasi T."/>
            <person name="Lenhard B."/>
            <person name="Wells C."/>
            <person name="Kodzius R."/>
            <person name="Shimokawa K."/>
            <person name="Bajic V.B."/>
            <person name="Brenner S.E."/>
            <person name="Batalov S."/>
            <person name="Forrest A.R."/>
            <person name="Zavolan M."/>
            <person name="Davis M.J."/>
            <person name="Wilming L.G."/>
            <person name="Aidinis V."/>
            <person name="Allen J.E."/>
            <person name="Ambesi-Impiombato A."/>
            <person name="Apweiler R."/>
            <person name="Aturaliya R.N."/>
            <person name="Bailey T.L."/>
            <person name="Bansal M."/>
            <person name="Baxter L."/>
            <person name="Beisel K.W."/>
            <person name="Bersano T."/>
            <person name="Bono H."/>
            <person name="Chalk A.M."/>
            <person name="Chiu K.P."/>
            <person name="Choudhary V."/>
            <person name="Christoffels A."/>
            <person name="Clutterbuck D.R."/>
            <person name="Crowe M.L."/>
            <person name="Dalla E."/>
            <person name="Dalrymple B.P."/>
            <person name="de Bono B."/>
            <person name="Della Gatta G."/>
            <person name="di Bernardo D."/>
            <person name="Down T."/>
            <person name="Engstrom P."/>
            <person name="Fagiolini M."/>
            <person name="Faulkner G."/>
            <person name="Fletcher C.F."/>
            <person name="Fukushima T."/>
            <person name="Furuno M."/>
            <person name="Futaki S."/>
            <person name="Gariboldi M."/>
            <person name="Georgii-Hemming P."/>
            <person name="Gingeras T.R."/>
            <person name="Gojobori T."/>
            <person name="Green R.E."/>
            <person name="Gustincich S."/>
            <person name="Harbers M."/>
            <person name="Hayashi Y."/>
            <person name="Hensch T.K."/>
            <person name="Hirokawa N."/>
            <person name="Hill D."/>
            <person name="Huminiecki L."/>
            <person name="Iacono M."/>
            <person name="Ikeo K."/>
            <person name="Iwama A."/>
            <person name="Ishikawa T."/>
            <person name="Jakt M."/>
            <person name="Kanapin A."/>
            <person name="Katoh M."/>
            <person name="Kawasawa Y."/>
            <person name="Kelso J."/>
            <person name="Kitamura H."/>
            <person name="Kitano H."/>
            <person name="Kollias G."/>
            <person name="Krishnan S.P."/>
            <person name="Kruger A."/>
            <person name="Kummerfeld S.K."/>
            <person name="Kurochkin I.V."/>
            <person name="Lareau L.F."/>
            <person name="Lazarevic D."/>
            <person name="Lipovich L."/>
            <person name="Liu J."/>
            <person name="Liuni S."/>
            <person name="McWilliam S."/>
            <person name="Madan Babu M."/>
            <person name="Madera M."/>
            <person name="Marchionni L."/>
            <person name="Matsuda H."/>
            <person name="Matsuzawa S."/>
            <person name="Miki H."/>
            <person name="Mignone F."/>
            <person name="Miyake S."/>
            <person name="Morris K."/>
            <person name="Mottagui-Tabar S."/>
            <person name="Mulder N."/>
            <person name="Nakano N."/>
            <person name="Nakauchi H."/>
            <person name="Ng P."/>
            <person name="Nilsson R."/>
            <person name="Nishiguchi S."/>
            <person name="Nishikawa S."/>
            <person name="Nori F."/>
            <person name="Ohara O."/>
            <person name="Okazaki Y."/>
            <person name="Orlando V."/>
            <person name="Pang K.C."/>
            <person name="Pavan W.J."/>
            <person name="Pavesi G."/>
            <person name="Pesole G."/>
            <person name="Petrovsky N."/>
            <person name="Piazza S."/>
            <person name="Reed J."/>
            <person name="Reid J.F."/>
            <person name="Ring B.Z."/>
            <person name="Ringwald M."/>
            <person name="Rost B."/>
            <person name="Ruan Y."/>
            <person name="Salzberg S.L."/>
            <person name="Sandelin A."/>
            <person name="Schneider C."/>
            <person name="Schoenbach C."/>
            <person name="Sekiguchi K."/>
            <person name="Semple C.A."/>
            <person name="Seno S."/>
            <person name="Sessa L."/>
            <person name="Sheng Y."/>
            <person name="Shibata Y."/>
            <person name="Shimada H."/>
            <person name="Shimada K."/>
            <person name="Silva D."/>
            <person name="Sinclair B."/>
            <person name="Sperling S."/>
            <person name="Stupka E."/>
            <person name="Sugiura K."/>
            <person name="Sultana R."/>
            <person name="Takenaka Y."/>
            <person name="Taki K."/>
            <person name="Tammoja K."/>
            <person name="Tan S.L."/>
            <person name="Tang S."/>
            <person name="Taylor M.S."/>
            <person name="Tegner J."/>
            <person name="Teichmann S.A."/>
            <person name="Ueda H.R."/>
            <person name="van Nimwegen E."/>
            <person name="Verardo R."/>
            <person name="Wei C.L."/>
            <person name="Yagi K."/>
            <person name="Yamanishi H."/>
            <person name="Zabarovsky E."/>
            <person name="Zhu S."/>
            <person name="Zimmer A."/>
            <person name="Hide W."/>
            <person name="Bult C."/>
            <person name="Grimmond S.M."/>
            <person name="Teasdale R.D."/>
            <person name="Liu E.T."/>
            <person name="Brusic V."/>
            <person name="Quackenbush J."/>
            <person name="Wahlestedt C."/>
            <person name="Mattick J.S."/>
            <person name="Hume D.A."/>
            <person name="Kai C."/>
            <person name="Sasaki D."/>
            <person name="Tomaru Y."/>
            <person name="Fukuda S."/>
            <person name="Kanamori-Katayama M."/>
            <person name="Suzuki M."/>
            <person name="Aoki J."/>
            <person name="Arakawa T."/>
            <person name="Iida J."/>
            <person name="Imamura K."/>
            <person name="Itoh M."/>
            <person name="Kato T."/>
            <person name="Kawaji H."/>
            <person name="Kawagashira N."/>
            <person name="Kawashima T."/>
            <person name="Kojima M."/>
            <person name="Kondo S."/>
            <person name="Konno H."/>
            <person name="Nakano K."/>
            <person name="Ninomiya N."/>
            <person name="Nishio T."/>
            <person name="Okada M."/>
            <person name="Plessy C."/>
            <person name="Shibata K."/>
            <person name="Shiraki T."/>
            <person name="Suzuki S."/>
            <person name="Tagami M."/>
            <person name="Waki K."/>
            <person name="Watahiki A."/>
            <person name="Okamura-Oho Y."/>
            <person name="Suzuki H."/>
            <person name="Kawai J."/>
            <person name="Hayashizaki Y."/>
        </authorList>
    </citation>
    <scope>NUCLEOTIDE SEQUENCE [LARGE SCALE MRNA] (ISOFORMS 1 AND 3)</scope>
    <source>
        <strain>C57BL/6J</strain>
        <tissue>Blastocyst</tissue>
        <tissue>Cerebellum</tissue>
        <tissue>Diencephalon</tissue>
        <tissue>Embryonic head</tissue>
        <tissue>Skin</tissue>
        <tissue>Urinary bladder</tissue>
    </source>
</reference>
<reference key="5">
    <citation type="journal article" date="2004" name="Genome Res.">
        <title>The status, quality, and expansion of the NIH full-length cDNA project: the Mammalian Gene Collection (MGC).</title>
        <authorList>
            <consortium name="The MGC Project Team"/>
        </authorList>
    </citation>
    <scope>NUCLEOTIDE SEQUENCE [LARGE SCALE MRNA] (ISOFORM 1)</scope>
</reference>
<reference key="6">
    <citation type="journal article" date="2013" name="PLoS ONE">
        <title>M89V Sialic acid Acetyl Esterase (SIAE) and all other non-synonymous common variants of this gene are catalytically normal.</title>
        <authorList>
            <person name="Chellappa V."/>
            <person name="Taylor K.N."/>
            <person name="Pedrick K."/>
            <person name="Donado C."/>
            <person name="Netravali I.A."/>
            <person name="Haider K."/>
            <person name="Cariappa A."/>
            <person name="Dalomba N.F."/>
            <person name="Pillai S."/>
        </authorList>
    </citation>
    <scope>FUNCTION</scope>
    <scope>CATALYTIC ACTIVITY</scope>
</reference>
<reference key="7">
    <citation type="journal article" date="2010" name="Cell">
        <title>A tissue-specific atlas of mouse protein phosphorylation and expression.</title>
        <authorList>
            <person name="Huttlin E.L."/>
            <person name="Jedrychowski M.P."/>
            <person name="Elias J.E."/>
            <person name="Goswami T."/>
            <person name="Rad R."/>
            <person name="Beausoleil S.A."/>
            <person name="Villen J."/>
            <person name="Haas W."/>
            <person name="Sowa M.E."/>
            <person name="Gygi S.P."/>
        </authorList>
    </citation>
    <scope>IDENTIFICATION BY MASS SPECTROMETRY [LARGE SCALE ANALYSIS]</scope>
    <source>
        <tissue>Brain</tissue>
        <tissue>Brown adipose tissue</tissue>
        <tissue>Heart</tissue>
        <tissue>Kidney</tissue>
        <tissue>Liver</tissue>
        <tissue>Spleen</tissue>
        <tissue>Testis</tissue>
    </source>
</reference>
<sequence length="541" mass="60775">MVSPGPVFGIVLLIIARVSRSAGIGFRFASYIDNYMVLQKEPSGAVIWGFGTPGATVTVTLCQGQETIMKKVTSVKEPSNTWMVVLDPMKPGGPFEVMAQQTLGTMNFTLRVHDVLFGDVWLCSGQSNMQMTVSQIFNASKELSDTAAYQSVRIFSVSLIQSEEELDDLTEVDLSWSKPTAGNLGHGNFTYMSAVCWLFGRYLYDTLQYPIGLVSSSWGGTYIEVWSSRRTLKACGVPNTRDERVGQPEIKPMRNECNSEESSCPFRVVPSVRVTGPTRHSVLWNAMIHPLQNMTLKGVVWYQGESNADYNRDLYTCMFPELIEDWRQTFHYGSQGQTDRFFPFGFVQLSSYMLKNSSDYGFPEIRWHQTADFGHVPNPKMPNTFMAVAIDLCDRDSPFGSIHPRDKQTVAYRLHLGARAVAYGEKNLTFQGPLPKKIELLASNGLLNLTYDQEIQVQMQDNKTFEISCCSDRHCKWLPAPVNTFSTQTLILDLNACLGTVVAVRYAWTTWPCEYKQCAVYHTSSMLPAPPFIAQISHRGI</sequence>
<organism>
    <name type="scientific">Mus musculus</name>
    <name type="common">Mouse</name>
    <dbReference type="NCBI Taxonomy" id="10090"/>
    <lineage>
        <taxon>Eukaryota</taxon>
        <taxon>Metazoa</taxon>
        <taxon>Chordata</taxon>
        <taxon>Craniata</taxon>
        <taxon>Vertebrata</taxon>
        <taxon>Euteleostomi</taxon>
        <taxon>Mammalia</taxon>
        <taxon>Eutheria</taxon>
        <taxon>Euarchontoglires</taxon>
        <taxon>Glires</taxon>
        <taxon>Rodentia</taxon>
        <taxon>Myomorpha</taxon>
        <taxon>Muroidea</taxon>
        <taxon>Muridae</taxon>
        <taxon>Murinae</taxon>
        <taxon>Mus</taxon>
        <taxon>Mus</taxon>
    </lineage>
</organism>
<name>SIAE_MOUSE</name>
<evidence type="ECO:0000250" key="1"/>
<evidence type="ECO:0000255" key="2"/>
<evidence type="ECO:0000269" key="3">
    <source>
    </source>
</evidence>
<evidence type="ECO:0000269" key="4">
    <source>
    </source>
</evidence>
<evidence type="ECO:0000269" key="5">
    <source>
    </source>
</evidence>
<evidence type="ECO:0000303" key="6">
    <source>
    </source>
</evidence>
<evidence type="ECO:0000303" key="7">
    <source>
    </source>
</evidence>
<evidence type="ECO:0000303" key="8">
    <source>
    </source>
</evidence>
<evidence type="ECO:0000305" key="9"/>
<evidence type="ECO:0000305" key="10">
    <source>
    </source>
</evidence>
<evidence type="ECO:0000305" key="11">
    <source>
    </source>
</evidence>
<evidence type="ECO:0000305" key="12">
    <source>
    </source>
</evidence>
<keyword id="KW-0025">Alternative splicing</keyword>
<keyword id="KW-0963">Cytoplasm</keyword>
<keyword id="KW-1015">Disulfide bond</keyword>
<keyword id="KW-0325">Glycoprotein</keyword>
<keyword id="KW-0378">Hydrolase</keyword>
<keyword id="KW-0458">Lysosome</keyword>
<keyword id="KW-1185">Reference proteome</keyword>
<keyword id="KW-0719">Serine esterase</keyword>
<keyword id="KW-0732">Signal</keyword>
<proteinExistence type="evidence at protein level"/>
<comment type="function">
    <text evidence="4 10 11 12">Catalyzes the removal of O-acetyl ester groups from position 9 of the free diacetylated sialate N-acetyl-9-O-acetylneuraminate (Neu5,9Ac2) in the cytosol and of the diacetylated sialate residues of sialylglycoconjugates in the lysosomes (Probable) (PubMed:8662838). Together with the sialate-O-acetyltransferase they regulate the balance of acetylated sialoglycoconjugates, key players in various processes such as cell-cell interactions, host-pathogen recognition, and tumor antigenicity (Probable).</text>
</comment>
<comment type="catalytic activity">
    <molecule>Isoform 2</molecule>
    <reaction evidence="3 4 11">
        <text>N-acetyl-9-O-acetylneuraminate + H2O = N-acetylneuraminate + acetate + H(+)</text>
        <dbReference type="Rhea" id="RHEA:22600"/>
        <dbReference type="ChEBI" id="CHEBI:15377"/>
        <dbReference type="ChEBI" id="CHEBI:15378"/>
        <dbReference type="ChEBI" id="CHEBI:28999"/>
        <dbReference type="ChEBI" id="CHEBI:30089"/>
        <dbReference type="ChEBI" id="CHEBI:35418"/>
        <dbReference type="EC" id="3.1.1.53"/>
    </reaction>
    <physiologicalReaction direction="left-to-right" evidence="10 11 12">
        <dbReference type="Rhea" id="RHEA:22601"/>
    </physiologicalReaction>
</comment>
<comment type="catalytic activity">
    <molecule>Isoform 1</molecule>
    <reaction evidence="11">
        <text>an Ac-O-9-sialoglycoconjugate + H2O = a sialoglycoconjugate + acetate + H(+)</text>
        <dbReference type="Rhea" id="RHEA:80763"/>
        <dbReference type="ChEBI" id="CHEBI:15377"/>
        <dbReference type="ChEBI" id="CHEBI:15378"/>
        <dbReference type="ChEBI" id="CHEBI:30089"/>
        <dbReference type="ChEBI" id="CHEBI:231691"/>
        <dbReference type="ChEBI" id="CHEBI:231692"/>
    </reaction>
    <physiologicalReaction direction="left-to-right" evidence="11">
        <dbReference type="Rhea" id="RHEA:80764"/>
    </physiologicalReaction>
</comment>
<comment type="activity regulation">
    <text evidence="1">Inhibited by diisopropyl fluorophosphate and diethyl-P-nitrophenyl phosphate.</text>
</comment>
<comment type="subunit">
    <text evidence="1">Disulfide-linked heterodimer of a small subunit and a large subunit.</text>
</comment>
<comment type="subcellular location">
    <molecule>Isoform 1</molecule>
    <subcellularLocation>
        <location evidence="3">Lysosome</location>
    </subcellularLocation>
</comment>
<comment type="subcellular location">
    <molecule>Isoform 2</molecule>
    <subcellularLocation>
        <location evidence="3">Cytoplasm</location>
    </subcellularLocation>
</comment>
<comment type="alternative products">
    <event type="alternative splicing"/>
    <isoform>
        <id>P70665-1</id>
        <name>1</name>
        <name>Lse</name>
        <sequence type="displayed"/>
    </isoform>
    <isoform>
        <id>P70665-2</id>
        <name>2</name>
        <name>Cse</name>
        <sequence type="described" ref="VSP_004077"/>
    </isoform>
    <isoform>
        <id>P70665-3</id>
        <name>3</name>
        <sequence type="described" ref="VSP_018996 VSP_018997"/>
    </isoform>
</comment>
<comment type="tissue specificity">
    <molecule>Isoform 1</molecule>
    <text evidence="3 4 5">Highly expressed in liver, testis, and kidney, whereas skeletal muscle, adipose tissue, and heart have lower levels.</text>
</comment>
<comment type="tissue specificity">
    <molecule>Isoform 2</molecule>
    <text evidence="3">Highest expression in brain and ovary and lower levels in liver and thymus.</text>
</comment>
<comment type="PTM">
    <text evidence="1">The two subunits are derived from a single precursor by proteolytic cleavage.</text>
</comment>
<comment type="PTM">
    <text>The lysosomal isoform is glycosylated.</text>
</comment>
<comment type="sequence caution" evidence="9">
    <conflict type="erroneous initiation">
        <sequence resource="EMBL-CDS" id="BAC29164"/>
    </conflict>
</comment>
<feature type="signal peptide" evidence="1">
    <location>
        <begin position="1"/>
        <end position="23"/>
    </location>
</feature>
<feature type="chain" id="PRO_0000022714" description="Sialate O-acetylesterase small subunit">
    <location>
        <begin position="24"/>
        <end position="275"/>
    </location>
</feature>
<feature type="chain" id="PRO_0000022715" description="Sialate O-acetylesterase large subunit">
    <location>
        <begin position="276"/>
        <end position="541"/>
    </location>
</feature>
<feature type="glycosylation site" description="N-linked (GlcNAc...) asparagine" evidence="2">
    <location>
        <position position="107"/>
    </location>
</feature>
<feature type="glycosylation site" description="N-linked (GlcNAc...) asparagine" evidence="2">
    <location>
        <position position="138"/>
    </location>
</feature>
<feature type="glycosylation site" description="N-linked (GlcNAc...) asparagine" evidence="2">
    <location>
        <position position="188"/>
    </location>
</feature>
<feature type="glycosylation site" description="N-linked (GlcNAc...) asparagine" evidence="2">
    <location>
        <position position="293"/>
    </location>
</feature>
<feature type="glycosylation site" description="N-linked (GlcNAc...) asparagine" evidence="2">
    <location>
        <position position="356"/>
    </location>
</feature>
<feature type="glycosylation site" description="N-linked (GlcNAc...) asparagine" evidence="2">
    <location>
        <position position="427"/>
    </location>
</feature>
<feature type="glycosylation site" description="N-linked (GlcNAc...) asparagine" evidence="2">
    <location>
        <position position="448"/>
    </location>
</feature>
<feature type="glycosylation site" description="N-linked (GlcNAc...) asparagine" evidence="2">
    <location>
        <position position="462"/>
    </location>
</feature>
<feature type="splice variant" id="VSP_004077" description="In isoform 2." evidence="6">
    <location>
        <begin position="1"/>
        <end position="97"/>
    </location>
</feature>
<feature type="splice variant" id="VSP_018996" description="In isoform 3." evidence="7">
    <original>LSSYMLKNSSDYGFPEIRWHQTADFGHVPNPKMPNTFMAVAI</original>
    <variation>VCIQRIHIQCLEFMGLCGECGLCTCLYWDLQPNICPNSMSWR</variation>
    <location>
        <begin position="349"/>
        <end position="390"/>
    </location>
</feature>
<feature type="splice variant" id="VSP_018997" description="In isoform 3." evidence="7">
    <location>
        <begin position="391"/>
        <end position="541"/>
    </location>
</feature>
<feature type="sequence conflict" description="In Ref. 4; BAE37942." evidence="9" ref="4">
    <original>D</original>
    <variation>N</variation>
    <location>
        <position position="114"/>
    </location>
</feature>
<feature type="sequence conflict" description="In Ref. 2; AAB07813 and 5; AAH07136." evidence="9" ref="2 5">
    <original>I</original>
    <variation>T</variation>
    <location>
        <position position="160"/>
    </location>
</feature>
<feature type="sequence conflict" description="In Ref. 4; BAC26026." evidence="9" ref="4">
    <original>L</original>
    <variation>Q</variation>
    <location>
        <position position="349"/>
    </location>
</feature>
<feature type="sequence conflict" description="In Ref. 4; BAC29164." evidence="9" ref="4">
    <original>F</original>
    <variation>L</variation>
    <location>
        <position position="373"/>
    </location>
</feature>
<feature type="sequence conflict" description="In Ref. 5; AAH07136." evidence="9" ref="5">
    <original>P</original>
    <variation>L</variation>
    <location>
        <position position="379"/>
    </location>
</feature>
<protein>
    <recommendedName>
        <fullName>Sialate O-acetylesterase</fullName>
        <shortName>SIAE</shortName>
        <ecNumber evidence="3 4 11">3.1.1.53</ecNumber>
    </recommendedName>
    <alternativeName>
        <fullName evidence="8">Sialic acid-specific 9-O-acetylesterase</fullName>
    </alternativeName>
    <alternativeName>
        <fullName>Yolk sac protein 2</fullName>
    </alternativeName>
    <component>
        <recommendedName>
            <fullName>Sialate O-acetylesterase small subunit</fullName>
        </recommendedName>
    </component>
    <component>
        <recommendedName>
            <fullName>Sialate O-acetylesterase large subunit</fullName>
        </recommendedName>
    </component>
</protein>